<name>PUR2_CLOAB</name>
<dbReference type="EC" id="6.3.4.13" evidence="2"/>
<dbReference type="EMBL" id="AE001437">
    <property type="protein sequence ID" value="AAK79364.1"/>
    <property type="molecule type" value="Genomic_DNA"/>
</dbReference>
<dbReference type="PIR" id="A97072">
    <property type="entry name" value="A97072"/>
</dbReference>
<dbReference type="RefSeq" id="NP_348024.1">
    <property type="nucleotide sequence ID" value="NC_003030.1"/>
</dbReference>
<dbReference type="RefSeq" id="WP_010964705.1">
    <property type="nucleotide sequence ID" value="NC_003030.1"/>
</dbReference>
<dbReference type="SMR" id="Q97J90"/>
<dbReference type="STRING" id="272562.CA_C1396"/>
<dbReference type="GeneID" id="44997902"/>
<dbReference type="KEGG" id="cac:CA_C1396"/>
<dbReference type="PATRIC" id="fig|272562.8.peg.1602"/>
<dbReference type="eggNOG" id="COG0151">
    <property type="taxonomic scope" value="Bacteria"/>
</dbReference>
<dbReference type="HOGENOM" id="CLU_027420_3_1_9"/>
<dbReference type="OrthoDB" id="9807240at2"/>
<dbReference type="UniPathway" id="UPA00074">
    <property type="reaction ID" value="UER00125"/>
</dbReference>
<dbReference type="Proteomes" id="UP000000814">
    <property type="component" value="Chromosome"/>
</dbReference>
<dbReference type="GO" id="GO:0005524">
    <property type="term" value="F:ATP binding"/>
    <property type="evidence" value="ECO:0007669"/>
    <property type="project" value="UniProtKB-KW"/>
</dbReference>
<dbReference type="GO" id="GO:0046872">
    <property type="term" value="F:metal ion binding"/>
    <property type="evidence" value="ECO:0007669"/>
    <property type="project" value="UniProtKB-KW"/>
</dbReference>
<dbReference type="GO" id="GO:0004637">
    <property type="term" value="F:phosphoribosylamine-glycine ligase activity"/>
    <property type="evidence" value="ECO:0007669"/>
    <property type="project" value="UniProtKB-UniRule"/>
</dbReference>
<dbReference type="GO" id="GO:0006189">
    <property type="term" value="P:'de novo' IMP biosynthetic process"/>
    <property type="evidence" value="ECO:0007669"/>
    <property type="project" value="UniProtKB-UniRule"/>
</dbReference>
<dbReference type="GO" id="GO:0009113">
    <property type="term" value="P:purine nucleobase biosynthetic process"/>
    <property type="evidence" value="ECO:0007669"/>
    <property type="project" value="InterPro"/>
</dbReference>
<dbReference type="FunFam" id="3.40.50.20:FF:000006">
    <property type="entry name" value="Phosphoribosylamine--glycine ligase, chloroplastic"/>
    <property type="match status" value="1"/>
</dbReference>
<dbReference type="Gene3D" id="3.40.50.20">
    <property type="match status" value="1"/>
</dbReference>
<dbReference type="Gene3D" id="3.30.1490.20">
    <property type="entry name" value="ATP-grasp fold, A domain"/>
    <property type="match status" value="1"/>
</dbReference>
<dbReference type="Gene3D" id="3.30.470.20">
    <property type="entry name" value="ATP-grasp fold, B domain"/>
    <property type="match status" value="1"/>
</dbReference>
<dbReference type="Gene3D" id="3.90.600.10">
    <property type="entry name" value="Phosphoribosylglycinamide synthetase, C-terminal domain"/>
    <property type="match status" value="1"/>
</dbReference>
<dbReference type="HAMAP" id="MF_00138">
    <property type="entry name" value="GARS"/>
    <property type="match status" value="1"/>
</dbReference>
<dbReference type="InterPro" id="IPR011761">
    <property type="entry name" value="ATP-grasp"/>
</dbReference>
<dbReference type="InterPro" id="IPR013815">
    <property type="entry name" value="ATP_grasp_subdomain_1"/>
</dbReference>
<dbReference type="InterPro" id="IPR016185">
    <property type="entry name" value="PreATP-grasp_dom_sf"/>
</dbReference>
<dbReference type="InterPro" id="IPR020561">
    <property type="entry name" value="PRibGlycinamid_synth_ATP-grasp"/>
</dbReference>
<dbReference type="InterPro" id="IPR000115">
    <property type="entry name" value="PRibGlycinamide_synth"/>
</dbReference>
<dbReference type="InterPro" id="IPR020560">
    <property type="entry name" value="PRibGlycinamide_synth_C-dom"/>
</dbReference>
<dbReference type="InterPro" id="IPR037123">
    <property type="entry name" value="PRibGlycinamide_synth_C_sf"/>
</dbReference>
<dbReference type="InterPro" id="IPR020559">
    <property type="entry name" value="PRibGlycinamide_synth_CS"/>
</dbReference>
<dbReference type="InterPro" id="IPR020562">
    <property type="entry name" value="PRibGlycinamide_synth_N"/>
</dbReference>
<dbReference type="InterPro" id="IPR011054">
    <property type="entry name" value="Rudment_hybrid_motif"/>
</dbReference>
<dbReference type="NCBIfam" id="TIGR00877">
    <property type="entry name" value="purD"/>
    <property type="match status" value="1"/>
</dbReference>
<dbReference type="PANTHER" id="PTHR43472">
    <property type="entry name" value="PHOSPHORIBOSYLAMINE--GLYCINE LIGASE"/>
    <property type="match status" value="1"/>
</dbReference>
<dbReference type="PANTHER" id="PTHR43472:SF1">
    <property type="entry name" value="PHOSPHORIBOSYLAMINE--GLYCINE LIGASE, CHLOROPLASTIC"/>
    <property type="match status" value="1"/>
</dbReference>
<dbReference type="Pfam" id="PF01071">
    <property type="entry name" value="GARS_A"/>
    <property type="match status" value="1"/>
</dbReference>
<dbReference type="Pfam" id="PF02843">
    <property type="entry name" value="GARS_C"/>
    <property type="match status" value="1"/>
</dbReference>
<dbReference type="Pfam" id="PF02844">
    <property type="entry name" value="GARS_N"/>
    <property type="match status" value="1"/>
</dbReference>
<dbReference type="SMART" id="SM01209">
    <property type="entry name" value="GARS_A"/>
    <property type="match status" value="1"/>
</dbReference>
<dbReference type="SMART" id="SM01210">
    <property type="entry name" value="GARS_C"/>
    <property type="match status" value="1"/>
</dbReference>
<dbReference type="SUPFAM" id="SSF56059">
    <property type="entry name" value="Glutathione synthetase ATP-binding domain-like"/>
    <property type="match status" value="1"/>
</dbReference>
<dbReference type="SUPFAM" id="SSF52440">
    <property type="entry name" value="PreATP-grasp domain"/>
    <property type="match status" value="1"/>
</dbReference>
<dbReference type="SUPFAM" id="SSF51246">
    <property type="entry name" value="Rudiment single hybrid motif"/>
    <property type="match status" value="1"/>
</dbReference>
<dbReference type="PROSITE" id="PS50975">
    <property type="entry name" value="ATP_GRASP"/>
    <property type="match status" value="1"/>
</dbReference>
<dbReference type="PROSITE" id="PS00184">
    <property type="entry name" value="GARS"/>
    <property type="match status" value="1"/>
</dbReference>
<gene>
    <name evidence="2" type="primary">purD</name>
    <name type="ordered locus">CA_C1396</name>
</gene>
<evidence type="ECO:0000250" key="1"/>
<evidence type="ECO:0000255" key="2">
    <source>
        <dbReference type="HAMAP-Rule" id="MF_00138"/>
    </source>
</evidence>
<protein>
    <recommendedName>
        <fullName evidence="2">Phosphoribosylamine--glycine ligase</fullName>
        <ecNumber evidence="2">6.3.4.13</ecNumber>
    </recommendedName>
    <alternativeName>
        <fullName evidence="2">GARS</fullName>
    </alternativeName>
    <alternativeName>
        <fullName evidence="2">Glycinamide ribonucleotide synthetase</fullName>
    </alternativeName>
    <alternativeName>
        <fullName evidence="2">Phosphoribosylglycinamide synthetase</fullName>
    </alternativeName>
</protein>
<keyword id="KW-0067">ATP-binding</keyword>
<keyword id="KW-0436">Ligase</keyword>
<keyword id="KW-0460">Magnesium</keyword>
<keyword id="KW-0464">Manganese</keyword>
<keyword id="KW-0479">Metal-binding</keyword>
<keyword id="KW-0547">Nucleotide-binding</keyword>
<keyword id="KW-0658">Purine biosynthesis</keyword>
<keyword id="KW-1185">Reference proteome</keyword>
<sequence>MKILLIGSGGREHAMAWKMAQNKSVERIYCAPGNGGTAKENKCENVNLEKTEELIEFASKNNIDLTVVGPEAPLVDGIVNEFKEKGLKIFGPGKVGAQLEGSKSFSKDFMKKYNVKTAEYAVFENSEESLEYLKKCTYPIVIKADGLAAGKGVVICEDYKLAEETIKAFMVKDVFKGSGKKVVIEEYLEGVEASILSITDGKAIIPFVSSKDHKQIFDGNKGPNTGGMGAISPNPYCTEEVLKSFEEEILKPTLIGIQEERMDFTGIIFFGLMITKKGVYLLEYNVRLGDPETQVVLYLMKSDFVDLINAAMDKKLSDFDIEWYDGNACCVVAASKGYPKNYSTGYEISGIDDAGDKVFCAGVKLENGVYKTSGGRVLCASARGITLDEAIKKAYTDIERIKFDGIYYRKDIGKSK</sequence>
<reference key="1">
    <citation type="journal article" date="2001" name="J. Bacteriol.">
        <title>Genome sequence and comparative analysis of the solvent-producing bacterium Clostridium acetobutylicum.</title>
        <authorList>
            <person name="Noelling J."/>
            <person name="Breton G."/>
            <person name="Omelchenko M.V."/>
            <person name="Makarova K.S."/>
            <person name="Zeng Q."/>
            <person name="Gibson R."/>
            <person name="Lee H.M."/>
            <person name="Dubois J."/>
            <person name="Qiu D."/>
            <person name="Hitti J."/>
            <person name="Wolf Y.I."/>
            <person name="Tatusov R.L."/>
            <person name="Sabathe F."/>
            <person name="Doucette-Stamm L.A."/>
            <person name="Soucaille P."/>
            <person name="Daly M.J."/>
            <person name="Bennett G.N."/>
            <person name="Koonin E.V."/>
            <person name="Smith D.R."/>
        </authorList>
    </citation>
    <scope>NUCLEOTIDE SEQUENCE [LARGE SCALE GENOMIC DNA]</scope>
    <source>
        <strain>ATCC 824 / DSM 792 / JCM 1419 / IAM 19013 / LMG 5710 / NBRC 13948 / NRRL B-527 / VKM B-1787 / 2291 / W</strain>
    </source>
</reference>
<proteinExistence type="inferred from homology"/>
<organism>
    <name type="scientific">Clostridium acetobutylicum (strain ATCC 824 / DSM 792 / JCM 1419 / IAM 19013 / LMG 5710 / NBRC 13948 / NRRL B-527 / VKM B-1787 / 2291 / W)</name>
    <dbReference type="NCBI Taxonomy" id="272562"/>
    <lineage>
        <taxon>Bacteria</taxon>
        <taxon>Bacillati</taxon>
        <taxon>Bacillota</taxon>
        <taxon>Clostridia</taxon>
        <taxon>Eubacteriales</taxon>
        <taxon>Clostridiaceae</taxon>
        <taxon>Clostridium</taxon>
    </lineage>
</organism>
<comment type="catalytic activity">
    <reaction evidence="2">
        <text>5-phospho-beta-D-ribosylamine + glycine + ATP = N(1)-(5-phospho-beta-D-ribosyl)glycinamide + ADP + phosphate + H(+)</text>
        <dbReference type="Rhea" id="RHEA:17453"/>
        <dbReference type="ChEBI" id="CHEBI:15378"/>
        <dbReference type="ChEBI" id="CHEBI:30616"/>
        <dbReference type="ChEBI" id="CHEBI:43474"/>
        <dbReference type="ChEBI" id="CHEBI:57305"/>
        <dbReference type="ChEBI" id="CHEBI:58681"/>
        <dbReference type="ChEBI" id="CHEBI:143788"/>
        <dbReference type="ChEBI" id="CHEBI:456216"/>
        <dbReference type="EC" id="6.3.4.13"/>
    </reaction>
</comment>
<comment type="cofactor">
    <cofactor evidence="1">
        <name>Mg(2+)</name>
        <dbReference type="ChEBI" id="CHEBI:18420"/>
    </cofactor>
    <cofactor evidence="1">
        <name>Mn(2+)</name>
        <dbReference type="ChEBI" id="CHEBI:29035"/>
    </cofactor>
    <text evidence="1">Binds 1 Mg(2+) or Mn(2+) ion per subunit.</text>
</comment>
<comment type="pathway">
    <text evidence="2">Purine metabolism; IMP biosynthesis via de novo pathway; N(1)-(5-phospho-D-ribosyl)glycinamide from 5-phospho-alpha-D-ribose 1-diphosphate: step 2/2.</text>
</comment>
<comment type="similarity">
    <text evidence="2">Belongs to the GARS family.</text>
</comment>
<feature type="chain" id="PRO_0000151444" description="Phosphoribosylamine--glycine ligase">
    <location>
        <begin position="1"/>
        <end position="416"/>
    </location>
</feature>
<feature type="domain" description="ATP-grasp" evidence="2">
    <location>
        <begin position="107"/>
        <end position="313"/>
    </location>
</feature>
<feature type="binding site" evidence="2">
    <location>
        <begin position="133"/>
        <end position="194"/>
    </location>
    <ligand>
        <name>ATP</name>
        <dbReference type="ChEBI" id="CHEBI:30616"/>
    </ligand>
</feature>
<feature type="binding site" evidence="2">
    <location>
        <position position="283"/>
    </location>
    <ligand>
        <name>Mg(2+)</name>
        <dbReference type="ChEBI" id="CHEBI:18420"/>
    </ligand>
</feature>
<feature type="binding site" evidence="2">
    <location>
        <position position="285"/>
    </location>
    <ligand>
        <name>Mg(2+)</name>
        <dbReference type="ChEBI" id="CHEBI:18420"/>
    </ligand>
</feature>
<accession>Q97J90</accession>